<dbReference type="PIR" id="A29481">
    <property type="entry name" value="A29481"/>
</dbReference>
<dbReference type="MEROPS" id="I39.007"/>
<dbReference type="GO" id="GO:0005576">
    <property type="term" value="C:extracellular region"/>
    <property type="evidence" value="ECO:0007669"/>
    <property type="project" value="UniProtKB-SubCell"/>
</dbReference>
<dbReference type="GO" id="GO:0004867">
    <property type="term" value="F:serine-type endopeptidase inhibitor activity"/>
    <property type="evidence" value="ECO:0007669"/>
    <property type="project" value="UniProtKB-KW"/>
</dbReference>
<dbReference type="Gene3D" id="1.50.10.20">
    <property type="match status" value="1"/>
</dbReference>
<dbReference type="InterPro" id="IPR019742">
    <property type="entry name" value="MacrogloblnA2_CS"/>
</dbReference>
<dbReference type="PROSITE" id="PS00477">
    <property type="entry name" value="ALPHA_2_MACROGLOBULIN"/>
    <property type="match status" value="1"/>
</dbReference>
<protein>
    <recommendedName>
        <fullName>Alpha-2-macroglobulin homolog</fullName>
        <shortName>Alpha-2-M</shortName>
    </recommendedName>
</protein>
<reference key="1">
    <citation type="journal article" date="1987" name="J. Biol. Chem.">
        <title>A functional, thioester-containing alpha 2-macroglobulin homologue isolated from the hemolymph of the American lobster (Homarus americanus).</title>
        <authorList>
            <person name="Spycher S.E."/>
            <person name="Arya S."/>
            <person name="Isenman D.E."/>
            <person name="Painter R.H."/>
        </authorList>
    </citation>
    <scope>PROTEIN SEQUENCE</scope>
    <source>
        <tissue>Hemolymph</tissue>
    </source>
</reference>
<accession>P20737</accession>
<feature type="chain" id="PRO_0000093791" description="Alpha-2-macroglobulin homolog">
    <location>
        <begin position="1"/>
        <end position="38" status="greater than"/>
    </location>
</feature>
<feature type="cross-link" description="Isoglutamyl cysteine thioester (Cys-Gln)">
    <location>
        <begin position="27"/>
        <end position="30"/>
    </location>
</feature>
<feature type="non-consecutive residues" evidence="1">
    <location>
        <begin position="22"/>
        <end position="23"/>
    </location>
</feature>
<feature type="non-terminal residue">
    <location>
        <position position="38"/>
    </location>
</feature>
<keyword id="KW-0082">Bait region</keyword>
<keyword id="KW-0903">Direct protein sequencing</keyword>
<keyword id="KW-1015">Disulfide bond</keyword>
<keyword id="KW-0646">Protease inhibitor</keyword>
<keyword id="KW-0964">Secreted</keyword>
<keyword id="KW-0722">Serine protease inhibitor</keyword>
<keyword id="KW-0882">Thioester bond</keyword>
<proteinExistence type="evidence at protein level"/>
<evidence type="ECO:0000305" key="1"/>
<name>A2M_HOMAM</name>
<sequence>SYIITTPRMWVAGSPAQVRTYVMPYGCGEQNMVNFAPN</sequence>
<organism>
    <name type="scientific">Homarus americanus</name>
    <name type="common">American lobster</name>
    <dbReference type="NCBI Taxonomy" id="6706"/>
    <lineage>
        <taxon>Eukaryota</taxon>
        <taxon>Metazoa</taxon>
        <taxon>Ecdysozoa</taxon>
        <taxon>Arthropoda</taxon>
        <taxon>Crustacea</taxon>
        <taxon>Multicrustacea</taxon>
        <taxon>Malacostraca</taxon>
        <taxon>Eumalacostraca</taxon>
        <taxon>Eucarida</taxon>
        <taxon>Decapoda</taxon>
        <taxon>Pleocyemata</taxon>
        <taxon>Astacidea</taxon>
        <taxon>Nephropoidea</taxon>
        <taxon>Nephropidae</taxon>
        <taxon>Homarus</taxon>
    </lineage>
</organism>
<comment type="function">
    <text>Is able to inhibit all four classes of proteinases by a unique 'trapping' mechanism. This protein has a peptide stretch, called the 'bait region' which contains specific cleavage sites for different proteinases. When a proteinase cleaves the bait region, a conformational change is induced in the protein which traps the proteinase. The entrapped enzyme remains active against low molecular weight substrates (activity against high molecular weight substrates is greatly reduced). Following cleavage in the bait region a thioester bond is hydrolyzed and mediates the covalent binding of the protein to the proteinase.</text>
</comment>
<comment type="subunit">
    <text>Homodimer; disulfide-linked.</text>
</comment>
<comment type="subcellular location">
    <subcellularLocation>
        <location>Secreted</location>
    </subcellularLocation>
</comment>
<comment type="tissue specificity">
    <text>Hemolymph.</text>
</comment>
<comment type="similarity">
    <text evidence="1">Belongs to the protease inhibitor I39 (alpha-2-macroglobulin) family.</text>
</comment>